<comment type="function">
    <text evidence="1 2">Acts as a transcriptional repressor (By similarity). Capable of transcription autoinactivation (By similarity). Binds to the consensus sequence 5'-C/GTAAT-3' in downstream activin regulatory elements (DARE) in the gene promoter, thereby repressing the transcription of CGA/alpha-GSU and GNRHR (By similarity). Represses transcription of myoblast differentiation factors (By similarity). Binds to core enhancer regions in target gene promoters of myoblast differentiation factors with binding specificity facilitated by interaction with PIAS1 (By similarity). Regulates, in a stage-specific manner, a developmental program of gene expression in the fetal tooth bud that controls odontoblast differentiation and proliferation of dental mesenchymal cells (By similarity). At the bud stage, required for mesenchymal molar tooth bud development via facilitating reciprocal signaling between dental epithelial and mesenchymal cells (By similarity). May also regulate expression of Wnt antagonists such as DKK2 and SFPR2 in the developing tooth mesenchyme (By similarity). Required for BMP4 expression in dental mesenchyme cells (By similarity). Also, in response to BMP4, required for BMP4 expression in neighboring dental epithelial cells (By similarity). Required for maximal FGF4-induced expression of SDC1 in dental mesenchyme cells (By similarity). Also in response to SDC1, required for SDC1 expression in neighboring dental epithelial cells (By similarity). At the early bell stage, acts to drive proliferation of dental mesenchyme cells, however during the late bell stage acts as an homeostatic regulator of the cell cycle (By similarity). Regulates proliferation and inhibits premature mesenchymal odontogenesis during the bell stage via inhibition of the Wnt signaling component CTNNB1 and subsequent repression of the odontoblast differentiation factors BMP2, BMP4, LEF1, ALPL and BGLAP/OCN (By similarity). Additionally, required for correct development and fusion of the palatal shelves and embryonic mandibular formation (By similarity). Plays a role in embryonic bone formation of the middle ear, skull and nasal bones (By similarity). Required for correct formation and thickness of the nail plate (By similarity). May play a role in limb-pattern formation (By similarity).</text>
</comment>
<comment type="subunit">
    <text evidence="1">Interacts with CREBBP/CBP, TBP and SP1; interaction with these transcription activators may inhibit autoinactivation (By similarity). Interacts (via C-terminus) with PIAS1 (via N-terminus); the interaction is required for the localization of both proteins to the nuclear periphery and specific binding of MSX1 to the core enhancer region in target gene promoters (By similarity). Interacts with H1-5 (By similarity).</text>
</comment>
<comment type="subcellular location">
    <subcellularLocation>
        <location evidence="1">Nucleus</location>
    </subcellularLocation>
    <text evidence="1">Interaction with PIAS1 is required for localization to the nuclear periphery (By similarity).</text>
</comment>
<comment type="PTM">
    <text evidence="1">Sumoylated by PIAS1, desumoylated by SENP1 (By similarity). Sumoylation of Lys-9 and Lys-127 not required for interaction with H1-5, transcriptional repression, inhibition of myoblast differentiation, or binding to gene promoters (By similarity).</text>
</comment>
<comment type="similarity">
    <text evidence="5">Belongs to the Msh homeobox family.</text>
</comment>
<accession>Q2VL82</accession>
<proteinExistence type="inferred from homology"/>
<evidence type="ECO:0000250" key="1">
    <source>
        <dbReference type="UniProtKB" id="P13297"/>
    </source>
</evidence>
<evidence type="ECO:0000250" key="2">
    <source>
        <dbReference type="UniProtKB" id="P28360"/>
    </source>
</evidence>
<evidence type="ECO:0000255" key="3">
    <source>
        <dbReference type="PROSITE-ProRule" id="PRU00108"/>
    </source>
</evidence>
<evidence type="ECO:0000256" key="4">
    <source>
        <dbReference type="SAM" id="MobiDB-lite"/>
    </source>
</evidence>
<evidence type="ECO:0000305" key="5"/>
<keyword id="KW-0217">Developmental protein</keyword>
<keyword id="KW-0238">DNA-binding</keyword>
<keyword id="KW-0371">Homeobox</keyword>
<keyword id="KW-1017">Isopeptide bond</keyword>
<keyword id="KW-0539">Nucleus</keyword>
<keyword id="KW-0678">Repressor</keyword>
<keyword id="KW-0804">Transcription</keyword>
<keyword id="KW-0805">Transcription regulation</keyword>
<keyword id="KW-0832">Ubl conjugation</keyword>
<gene>
    <name evidence="1" type="primary">MSX1</name>
</gene>
<protein>
    <recommendedName>
        <fullName evidence="5">Homeobox protein MSX-1</fullName>
    </recommendedName>
    <alternativeName>
        <fullName>Msh homeobox 1-like protein</fullName>
    </alternativeName>
</protein>
<feature type="chain" id="PRO_0000049095" description="Homeobox protein MSX-1">
    <location>
        <begin position="1" status="less than"/>
        <end position="297"/>
    </location>
</feature>
<feature type="DNA-binding region" description="Homeobox" evidence="3">
    <location>
        <begin position="166"/>
        <end position="225"/>
    </location>
</feature>
<feature type="region of interest" description="Disordered" evidence="4">
    <location>
        <begin position="1"/>
        <end position="50"/>
    </location>
</feature>
<feature type="region of interest" description="Disordered" evidence="4">
    <location>
        <begin position="63"/>
        <end position="109"/>
    </location>
</feature>
<feature type="region of interest" description="Disordered" evidence="4">
    <location>
        <begin position="127"/>
        <end position="157"/>
    </location>
</feature>
<feature type="compositionally biased region" description="Low complexity" evidence="4">
    <location>
        <begin position="25"/>
        <end position="38"/>
    </location>
</feature>
<feature type="compositionally biased region" description="Low complexity" evidence="4">
    <location>
        <begin position="71"/>
        <end position="100"/>
    </location>
</feature>
<feature type="compositionally biased region" description="Basic and acidic residues" evidence="4">
    <location>
        <begin position="127"/>
        <end position="136"/>
    </location>
</feature>
<feature type="cross-link" description="Glycyl lysine isopeptide (Lys-Gly) (interchain with G-Cter in SUMO)" evidence="1">
    <location>
        <position position="9"/>
    </location>
</feature>
<feature type="cross-link" description="Glycyl lysine isopeptide (Lys-Gly) (interchain with G-Cter in SUMO)" evidence="1">
    <location>
        <position position="127"/>
    </location>
</feature>
<feature type="non-terminal residue">
    <location>
        <position position="1"/>
    </location>
</feature>
<name>MSX1_SAGOE</name>
<reference key="1">
    <citation type="journal article" date="2006" name="Mol. Biol. Evol.">
        <title>Molecular evolution of the primate developmental genes MSX1 and PAX9.</title>
        <authorList>
            <person name="Perry G.H."/>
            <person name="Verrelli B.C."/>
            <person name="Stone A.C."/>
        </authorList>
    </citation>
    <scope>NUCLEOTIDE SEQUENCE [GENOMIC DNA]</scope>
    <source>
        <strain>Isolate A96-51 Sqr53-96</strain>
    </source>
</reference>
<dbReference type="EMBL" id="DQ067481">
    <property type="protein sequence ID" value="AAZ30471.1"/>
    <property type="molecule type" value="Genomic_DNA"/>
</dbReference>
<dbReference type="EMBL" id="DQ067480">
    <property type="protein sequence ID" value="AAZ30471.1"/>
    <property type="status" value="JOINED"/>
    <property type="molecule type" value="Genomic_DNA"/>
</dbReference>
<dbReference type="SMR" id="Q2VL82"/>
<dbReference type="GO" id="GO:0034399">
    <property type="term" value="C:nuclear periphery"/>
    <property type="evidence" value="ECO:0000250"/>
    <property type="project" value="UniProtKB"/>
</dbReference>
<dbReference type="GO" id="GO:0000981">
    <property type="term" value="F:DNA-binding transcription factor activity, RNA polymerase II-specific"/>
    <property type="evidence" value="ECO:0007669"/>
    <property type="project" value="InterPro"/>
</dbReference>
<dbReference type="GO" id="GO:0000977">
    <property type="term" value="F:RNA polymerase II transcription regulatory region sequence-specific DNA binding"/>
    <property type="evidence" value="ECO:0007669"/>
    <property type="project" value="TreeGrafter"/>
</dbReference>
<dbReference type="GO" id="GO:0000976">
    <property type="term" value="F:transcription cis-regulatory region binding"/>
    <property type="evidence" value="ECO:0000250"/>
    <property type="project" value="UniProtKB"/>
</dbReference>
<dbReference type="GO" id="GO:0048598">
    <property type="term" value="P:embryonic morphogenesis"/>
    <property type="evidence" value="ECO:0007669"/>
    <property type="project" value="TreeGrafter"/>
</dbReference>
<dbReference type="GO" id="GO:0048839">
    <property type="term" value="P:inner ear development"/>
    <property type="evidence" value="ECO:0000250"/>
    <property type="project" value="UniProtKB"/>
</dbReference>
<dbReference type="GO" id="GO:0010629">
    <property type="term" value="P:negative regulation of gene expression"/>
    <property type="evidence" value="ECO:0000250"/>
    <property type="project" value="UniProtKB"/>
</dbReference>
<dbReference type="GO" id="GO:1901330">
    <property type="term" value="P:negative regulation of odontoblast differentiation"/>
    <property type="evidence" value="ECO:0000250"/>
    <property type="project" value="UniProtKB"/>
</dbReference>
<dbReference type="GO" id="GO:0043584">
    <property type="term" value="P:nose development"/>
    <property type="evidence" value="ECO:0000250"/>
    <property type="project" value="UniProtKB"/>
</dbReference>
<dbReference type="GO" id="GO:0045787">
    <property type="term" value="P:positive regulation of cell cycle"/>
    <property type="evidence" value="ECO:0000250"/>
    <property type="project" value="UniProtKB"/>
</dbReference>
<dbReference type="GO" id="GO:0042482">
    <property type="term" value="P:positive regulation of odontogenesis"/>
    <property type="evidence" value="ECO:0000250"/>
    <property type="project" value="UniProtKB"/>
</dbReference>
<dbReference type="GO" id="GO:0042481">
    <property type="term" value="P:regulation of odontogenesis"/>
    <property type="evidence" value="ECO:0000250"/>
    <property type="project" value="UniProtKB"/>
</dbReference>
<dbReference type="GO" id="GO:0060021">
    <property type="term" value="P:roof of mouth development"/>
    <property type="evidence" value="ECO:0000250"/>
    <property type="project" value="UniProtKB"/>
</dbReference>
<dbReference type="CDD" id="cd00086">
    <property type="entry name" value="homeodomain"/>
    <property type="match status" value="1"/>
</dbReference>
<dbReference type="FunFam" id="1.10.10.60:FF:000134">
    <property type="entry name" value="Homeobox protein MSX-1"/>
    <property type="match status" value="1"/>
</dbReference>
<dbReference type="Gene3D" id="1.10.10.60">
    <property type="entry name" value="Homeodomain-like"/>
    <property type="match status" value="1"/>
</dbReference>
<dbReference type="InterPro" id="IPR001356">
    <property type="entry name" value="HD"/>
</dbReference>
<dbReference type="InterPro" id="IPR020479">
    <property type="entry name" value="HD_metazoa"/>
</dbReference>
<dbReference type="InterPro" id="IPR017970">
    <property type="entry name" value="Homeobox_CS"/>
</dbReference>
<dbReference type="InterPro" id="IPR009057">
    <property type="entry name" value="Homeodomain-like_sf"/>
</dbReference>
<dbReference type="InterPro" id="IPR050674">
    <property type="entry name" value="Msh_Homeobox_Regulators"/>
</dbReference>
<dbReference type="PANTHER" id="PTHR24338">
    <property type="entry name" value="HOMEOBOX PROTEIN MSX"/>
    <property type="match status" value="1"/>
</dbReference>
<dbReference type="PANTHER" id="PTHR24338:SF8">
    <property type="entry name" value="HOMEOBOX PROTEIN MSX-1"/>
    <property type="match status" value="1"/>
</dbReference>
<dbReference type="Pfam" id="PF00046">
    <property type="entry name" value="Homeodomain"/>
    <property type="match status" value="1"/>
</dbReference>
<dbReference type="PRINTS" id="PR00024">
    <property type="entry name" value="HOMEOBOX"/>
</dbReference>
<dbReference type="SMART" id="SM00389">
    <property type="entry name" value="HOX"/>
    <property type="match status" value="1"/>
</dbReference>
<dbReference type="SUPFAM" id="SSF46689">
    <property type="entry name" value="Homeodomain-like"/>
    <property type="match status" value="1"/>
</dbReference>
<dbReference type="PROSITE" id="PS00027">
    <property type="entry name" value="HOMEOBOX_1"/>
    <property type="match status" value="1"/>
</dbReference>
<dbReference type="PROSITE" id="PS50071">
    <property type="entry name" value="HOMEOBOX_2"/>
    <property type="match status" value="1"/>
</dbReference>
<sequence>MTSLPLGVKVEDSAFGKPAGGGSGQAPSAAAATAAAMGADEEGAKPKVSPSLLPFSVEALMADHRKPGAKESSLAASESAQAAGGLAQPLGVPPGSLGVPDAPSSPRPLGHFSVGGLLKLPEDALVKAESPEKPERTPWMQSPRFSPPPARRLSPPACTLRKHKTNRKPRTPFTTAQLLALERKFRQKQYLSIAERAEFSSSLSLTETQVKIWFQNRRAKAKRLQEAELEKLKMAAKPMLPPAAFGLSFPLGGPAAVAAAAGASLYGASGPFQRAALPVAPVGLYTAHVGYSMYHLT</sequence>
<organism>
    <name type="scientific">Saguinus oedipus</name>
    <name type="common">Cotton-top tamarin</name>
    <dbReference type="NCBI Taxonomy" id="9490"/>
    <lineage>
        <taxon>Eukaryota</taxon>
        <taxon>Metazoa</taxon>
        <taxon>Chordata</taxon>
        <taxon>Craniata</taxon>
        <taxon>Vertebrata</taxon>
        <taxon>Euteleostomi</taxon>
        <taxon>Mammalia</taxon>
        <taxon>Eutheria</taxon>
        <taxon>Euarchontoglires</taxon>
        <taxon>Primates</taxon>
        <taxon>Haplorrhini</taxon>
        <taxon>Platyrrhini</taxon>
        <taxon>Cebidae</taxon>
        <taxon>Callitrichinae</taxon>
        <taxon>Saguinus</taxon>
    </lineage>
</organism>